<reference key="1">
    <citation type="journal article" date="2009" name="Stand. Genomic Sci.">
        <title>Complete genome sequence of Methanoculleus marisnigri Romesser et al. 1981 type strain JR1.</title>
        <authorList>
            <person name="Anderson I.J."/>
            <person name="Sieprawska-Lupa M."/>
            <person name="Lapidus A."/>
            <person name="Nolan M."/>
            <person name="Copeland A."/>
            <person name="Glavina Del Rio T."/>
            <person name="Tice H."/>
            <person name="Dalin E."/>
            <person name="Barry K."/>
            <person name="Saunders E."/>
            <person name="Han C."/>
            <person name="Brettin T."/>
            <person name="Detter J.C."/>
            <person name="Bruce D."/>
            <person name="Mikhailova N."/>
            <person name="Pitluck S."/>
            <person name="Hauser L."/>
            <person name="Land M."/>
            <person name="Lucas S."/>
            <person name="Richardson P."/>
            <person name="Whitman W.B."/>
            <person name="Kyrpides N.C."/>
        </authorList>
    </citation>
    <scope>NUCLEOTIDE SEQUENCE [LARGE SCALE GENOMIC DNA]</scope>
    <source>
        <strain>ATCC 35101 / DSM 1498 / JR1</strain>
    </source>
</reference>
<dbReference type="EMBL" id="CP000562">
    <property type="protein sequence ID" value="ABN57894.1"/>
    <property type="molecule type" value="Genomic_DNA"/>
</dbReference>
<dbReference type="RefSeq" id="WP_011844803.1">
    <property type="nucleotide sequence ID" value="NC_009051.1"/>
</dbReference>
<dbReference type="SMR" id="A3CWZ4"/>
<dbReference type="STRING" id="368407.Memar_1968"/>
<dbReference type="GeneID" id="4848019"/>
<dbReference type="KEGG" id="mem:Memar_1968"/>
<dbReference type="eggNOG" id="arCOG04176">
    <property type="taxonomic scope" value="Archaea"/>
</dbReference>
<dbReference type="HOGENOM" id="CLU_071894_1_0_2"/>
<dbReference type="OrthoDB" id="33582at2157"/>
<dbReference type="Proteomes" id="UP000002146">
    <property type="component" value="Chromosome"/>
</dbReference>
<dbReference type="GO" id="GO:0043022">
    <property type="term" value="F:ribosome binding"/>
    <property type="evidence" value="ECO:0007669"/>
    <property type="project" value="InterPro"/>
</dbReference>
<dbReference type="GO" id="GO:0003743">
    <property type="term" value="F:translation initiation factor activity"/>
    <property type="evidence" value="ECO:0007669"/>
    <property type="project" value="UniProtKB-UniRule"/>
</dbReference>
<dbReference type="GO" id="GO:0042256">
    <property type="term" value="P:cytosolic ribosome assembly"/>
    <property type="evidence" value="ECO:0007669"/>
    <property type="project" value="InterPro"/>
</dbReference>
<dbReference type="Gene3D" id="3.75.10.10">
    <property type="entry name" value="L-arginine/glycine Amidinotransferase, Chain A"/>
    <property type="match status" value="1"/>
</dbReference>
<dbReference type="HAMAP" id="MF_00032">
    <property type="entry name" value="eIF_6"/>
    <property type="match status" value="1"/>
</dbReference>
<dbReference type="InterPro" id="IPR002769">
    <property type="entry name" value="eIF6"/>
</dbReference>
<dbReference type="NCBIfam" id="TIGR00323">
    <property type="entry name" value="eIF-6"/>
    <property type="match status" value="1"/>
</dbReference>
<dbReference type="NCBIfam" id="NF003132">
    <property type="entry name" value="PRK04046.2-4"/>
    <property type="match status" value="1"/>
</dbReference>
<dbReference type="PANTHER" id="PTHR10784">
    <property type="entry name" value="TRANSLATION INITIATION FACTOR 6"/>
    <property type="match status" value="1"/>
</dbReference>
<dbReference type="Pfam" id="PF01912">
    <property type="entry name" value="eIF-6"/>
    <property type="match status" value="1"/>
</dbReference>
<dbReference type="PIRSF" id="PIRSF006413">
    <property type="entry name" value="IF-6"/>
    <property type="match status" value="1"/>
</dbReference>
<dbReference type="SMART" id="SM00654">
    <property type="entry name" value="eIF6"/>
    <property type="match status" value="1"/>
</dbReference>
<dbReference type="SUPFAM" id="SSF55909">
    <property type="entry name" value="Pentein"/>
    <property type="match status" value="1"/>
</dbReference>
<evidence type="ECO:0000255" key="1">
    <source>
        <dbReference type="HAMAP-Rule" id="MF_00032"/>
    </source>
</evidence>
<keyword id="KW-0396">Initiation factor</keyword>
<keyword id="KW-0648">Protein biosynthesis</keyword>
<organism>
    <name type="scientific">Methanoculleus marisnigri (strain ATCC 35101 / DSM 1498 / JR1)</name>
    <dbReference type="NCBI Taxonomy" id="368407"/>
    <lineage>
        <taxon>Archaea</taxon>
        <taxon>Methanobacteriati</taxon>
        <taxon>Methanobacteriota</taxon>
        <taxon>Stenosarchaea group</taxon>
        <taxon>Methanomicrobia</taxon>
        <taxon>Methanomicrobiales</taxon>
        <taxon>Methanomicrobiaceae</taxon>
        <taxon>Methanoculleus</taxon>
    </lineage>
</organism>
<protein>
    <recommendedName>
        <fullName evidence="1">Translation initiation factor 6</fullName>
        <shortName evidence="1">aIF-6</shortName>
    </recommendedName>
</protein>
<accession>A3CWZ4</accession>
<gene>
    <name evidence="1" type="primary">eif6</name>
    <name type="ordered locus">Memar_1968</name>
</gene>
<proteinExistence type="inferred from homology"/>
<feature type="chain" id="PRO_1000002601" description="Translation initiation factor 6">
    <location>
        <begin position="1"/>
        <end position="220"/>
    </location>
</feature>
<sequence>MTGTIDLAGDPNIGVYARVFEDIAIVYPGAPAEFTAALARELDVEIVSTFIQGSSIIGSLVSGNSQGLVVSGLATDEELAVLSEYRDVFLLKGPMNAAGNIILANDCVAAVHPEMQIDVAEEIGSFLEVPVVRLTLGGIKTVGMAGFATNKGILVHPRANDTEIANLERIVDLPIGLGSVNMGSGLVGTGLLANSKGYVAGSVTTGFELGRIEEVFGFLE</sequence>
<comment type="function">
    <text evidence="1">Binds to the 50S ribosomal subunit and prevents its association with the 30S ribosomal subunit to form the 70S initiation complex.</text>
</comment>
<comment type="similarity">
    <text evidence="1">Belongs to the eIF-6 family.</text>
</comment>
<name>IF6_METMJ</name>